<keyword id="KW-0202">Cytokine</keyword>
<keyword id="KW-1015">Disulfide bond</keyword>
<keyword id="KW-0325">Glycoprotein</keyword>
<keyword id="KW-0472">Membrane</keyword>
<keyword id="KW-1185">Reference proteome</keyword>
<keyword id="KW-0964">Secreted</keyword>
<keyword id="KW-0732">Signal</keyword>
<evidence type="ECO:0000250" key="1"/>
<evidence type="ECO:0000250" key="2">
    <source>
        <dbReference type="UniProtKB" id="P01374"/>
    </source>
</evidence>
<evidence type="ECO:0000255" key="3"/>
<evidence type="ECO:0000255" key="4">
    <source>
        <dbReference type="PROSITE-ProRule" id="PRU01387"/>
    </source>
</evidence>
<evidence type="ECO:0000305" key="5"/>
<proteinExistence type="inferred from homology"/>
<accession>P10154</accession>
<feature type="signal peptide">
    <location>
        <begin position="1"/>
        <end position="26"/>
    </location>
</feature>
<feature type="chain" id="PRO_0000034470" description="Lymphotoxin-alpha">
    <location>
        <begin position="27"/>
        <end position="197"/>
    </location>
</feature>
<feature type="domain" description="THD" evidence="4">
    <location>
        <begin position="55"/>
        <end position="197"/>
    </location>
</feature>
<feature type="glycosylation site" description="N-linked (GlcNAc...) asparagine" evidence="3">
    <location>
        <position position="88"/>
    </location>
</feature>
<feature type="disulfide bond" evidence="4">
    <location>
        <begin position="112"/>
        <end position="148"/>
    </location>
</feature>
<protein>
    <recommendedName>
        <fullName>Lymphotoxin-alpha</fullName>
        <shortName>LT-alpha</shortName>
    </recommendedName>
    <alternativeName>
        <fullName>TNF-beta</fullName>
    </alternativeName>
    <alternativeName>
        <fullName>Tumor necrosis factor ligand superfamily member 1</fullName>
    </alternativeName>
</protein>
<name>TNFB_RABIT</name>
<organism>
    <name type="scientific">Oryctolagus cuniculus</name>
    <name type="common">Rabbit</name>
    <dbReference type="NCBI Taxonomy" id="9986"/>
    <lineage>
        <taxon>Eukaryota</taxon>
        <taxon>Metazoa</taxon>
        <taxon>Chordata</taxon>
        <taxon>Craniata</taxon>
        <taxon>Vertebrata</taxon>
        <taxon>Euteleostomi</taxon>
        <taxon>Mammalia</taxon>
        <taxon>Eutheria</taxon>
        <taxon>Euarchontoglires</taxon>
        <taxon>Glires</taxon>
        <taxon>Lagomorpha</taxon>
        <taxon>Leporidae</taxon>
        <taxon>Oryctolagus</taxon>
    </lineage>
</organism>
<sequence length="197" mass="21126">MTPPGRLYLPLLLGLLLAPPPPGAQGLPGAEFPPSAARNAQQRLQKHFGHSTLKPAAHLVGDPSAQDSLRWRANTDRAFLRHGFSLSNNSLLVPSSGLYFVYSQVVFSGEGCSPKAVPTPLYLAHEVQLFSSQYSFHVPLLSAQKSVCPGPQGPWVRSVYQGAVFLLTQGDQLSTHTDGIAHLLLSPSSVFFGAFAL</sequence>
<comment type="function">
    <text evidence="2">Cytokine that in its homotrimeric form binds to TNFRSF1A/TNFR1, TNFRSF1B/TNFBR and TNFRSF14/HVEM (By similarity). In its heterotrimeric form with LTB binds to TNFRSF3/LTBR. Lymphotoxin is produced by lymphocytes and is cytotoxic for a wide range of tumor cells in vitro and in vivo.</text>
</comment>
<comment type="subunit">
    <text evidence="2">Homotrimer, and heterotrimer of either two LTB and one LTA subunits or (less prevalent) two LTA and one LTB subunits. Interacts with TNFRSF14.</text>
</comment>
<comment type="subcellular location">
    <subcellularLocation>
        <location evidence="1">Secreted</location>
    </subcellularLocation>
    <subcellularLocation>
        <location evidence="1">Membrane</location>
    </subcellularLocation>
    <text evidence="1">The homotrimer is secreted. The heterotrimer is membrane-associated.</text>
</comment>
<comment type="similarity">
    <text evidence="5">Belongs to the tumor necrosis factor family.</text>
</comment>
<gene>
    <name type="primary">LTA</name>
    <name type="synonym">TNFB</name>
    <name type="synonym">TNFSF1</name>
</gene>
<reference key="1">
    <citation type="journal article" date="1990" name="Gene">
        <title>Structural analysis of the rabbit TNF locus, containing the genes encoding TNF-beta (lymphotoxin) and TNF-alpha (tumor necrosis factor).</title>
        <authorList>
            <person name="Shakhov A.N."/>
            <person name="Kuprash D.V."/>
            <person name="Azizov M.M."/>
            <person name="Jongeneel C.V."/>
            <person name="Nedospasov S.A."/>
        </authorList>
    </citation>
    <scope>NUCLEOTIDE SEQUENCE [GENOMIC DNA]</scope>
</reference>
<reference key="2">
    <citation type="journal article" date="1989" name="Mol. Biol. (Mosk.)">
        <title>Cloning and structural analysis of genes coding for tumor necrosis factor and lymphotoxin in rabbits.</title>
        <authorList>
            <person name="Shakhov A.N."/>
            <person name="Kuprash D.V."/>
            <person name="Turetskaya R.L."/>
            <person name="Azizov M.M."/>
            <person name="Andreyeva A.V."/>
            <person name="Nedospasov S.A."/>
        </authorList>
    </citation>
    <scope>NUCLEOTIDE SEQUENCE [GENOMIC DNA]</scope>
</reference>
<dbReference type="EMBL" id="X55745">
    <property type="protein sequence ID" value="CAA39275.1"/>
    <property type="status" value="ALT_SEQ"/>
    <property type="molecule type" value="Genomic_DNA"/>
</dbReference>
<dbReference type="EMBL" id="M60340">
    <property type="protein sequence ID" value="AAA31483.1"/>
    <property type="molecule type" value="Genomic_DNA"/>
</dbReference>
<dbReference type="EMBL" id="M60341">
    <property type="protein sequence ID" value="AAA31485.1"/>
    <property type="molecule type" value="Genomic_DNA"/>
</dbReference>
<dbReference type="PIR" id="JH0309">
    <property type="entry name" value="JH0309"/>
</dbReference>
<dbReference type="RefSeq" id="NP_001164590.1">
    <property type="nucleotide sequence ID" value="NM_001171119.1"/>
</dbReference>
<dbReference type="RefSeq" id="XP_051710129.1">
    <property type="nucleotide sequence ID" value="XM_051854169.2"/>
</dbReference>
<dbReference type="RefSeq" id="XP_069929383.1">
    <property type="nucleotide sequence ID" value="XM_070073282.1"/>
</dbReference>
<dbReference type="SMR" id="P10154"/>
<dbReference type="FunCoup" id="P10154">
    <property type="interactions" value="48"/>
</dbReference>
<dbReference type="STRING" id="9986.ENSOCUP00000005782"/>
<dbReference type="GlyCosmos" id="P10154">
    <property type="glycosylation" value="1 site, No reported glycans"/>
</dbReference>
<dbReference type="PaxDb" id="9986-ENSOCUP00000005782"/>
<dbReference type="Ensembl" id="ENSOCUT00000006691.3">
    <property type="protein sequence ID" value="ENSOCUP00000005782.1"/>
    <property type="gene ID" value="ENSOCUG00000006694.4"/>
</dbReference>
<dbReference type="GeneID" id="100328931"/>
<dbReference type="KEGG" id="ocu:100328931"/>
<dbReference type="CTD" id="4049"/>
<dbReference type="eggNOG" id="ENOG502S956">
    <property type="taxonomic scope" value="Eukaryota"/>
</dbReference>
<dbReference type="GeneTree" id="ENSGT01060000248544"/>
<dbReference type="HOGENOM" id="CLU_070352_4_0_1"/>
<dbReference type="InParanoid" id="P10154"/>
<dbReference type="OMA" id="RSACQNV"/>
<dbReference type="OrthoDB" id="9940698at2759"/>
<dbReference type="TreeFam" id="TF332169"/>
<dbReference type="Proteomes" id="UP000001811">
    <property type="component" value="Chromosome 12"/>
</dbReference>
<dbReference type="Bgee" id="ENSOCUG00000006694">
    <property type="expression patterns" value="Expressed in blood and 3 other cell types or tissues"/>
</dbReference>
<dbReference type="ExpressionAtlas" id="P10154">
    <property type="expression patterns" value="baseline"/>
</dbReference>
<dbReference type="GO" id="GO:0005615">
    <property type="term" value="C:extracellular space"/>
    <property type="evidence" value="ECO:0007669"/>
    <property type="project" value="UniProtKB-KW"/>
</dbReference>
<dbReference type="GO" id="GO:0016020">
    <property type="term" value="C:membrane"/>
    <property type="evidence" value="ECO:0007669"/>
    <property type="project" value="UniProtKB-SubCell"/>
</dbReference>
<dbReference type="GO" id="GO:0005125">
    <property type="term" value="F:cytokine activity"/>
    <property type="evidence" value="ECO:0007669"/>
    <property type="project" value="UniProtKB-KW"/>
</dbReference>
<dbReference type="GO" id="GO:0005164">
    <property type="term" value="F:tumor necrosis factor receptor binding"/>
    <property type="evidence" value="ECO:0007669"/>
    <property type="project" value="InterPro"/>
</dbReference>
<dbReference type="GO" id="GO:0050830">
    <property type="term" value="P:defense response to Gram-positive bacterium"/>
    <property type="evidence" value="ECO:0007669"/>
    <property type="project" value="Ensembl"/>
</dbReference>
<dbReference type="GO" id="GO:0006959">
    <property type="term" value="P:humoral immune response"/>
    <property type="evidence" value="ECO:0007669"/>
    <property type="project" value="Ensembl"/>
</dbReference>
<dbReference type="GO" id="GO:0048535">
    <property type="term" value="P:lymph node development"/>
    <property type="evidence" value="ECO:0007669"/>
    <property type="project" value="Ensembl"/>
</dbReference>
<dbReference type="GO" id="GO:0043123">
    <property type="term" value="P:positive regulation of canonical NF-kappaB signal transduction"/>
    <property type="evidence" value="ECO:0007669"/>
    <property type="project" value="TreeGrafter"/>
</dbReference>
<dbReference type="GO" id="GO:0002876">
    <property type="term" value="P:positive regulation of chronic inflammatory response to antigenic stimulus"/>
    <property type="evidence" value="ECO:0007669"/>
    <property type="project" value="Ensembl"/>
</dbReference>
<dbReference type="GO" id="GO:2001238">
    <property type="term" value="P:positive regulation of extrinsic apoptotic signaling pathway"/>
    <property type="evidence" value="ECO:0007669"/>
    <property type="project" value="TreeGrafter"/>
</dbReference>
<dbReference type="GO" id="GO:0002925">
    <property type="term" value="P:positive regulation of humoral immune response mediated by circulating immunoglobulin"/>
    <property type="evidence" value="ECO:0007669"/>
    <property type="project" value="Ensembl"/>
</dbReference>
<dbReference type="GO" id="GO:0032729">
    <property type="term" value="P:positive regulation of type II interferon production"/>
    <property type="evidence" value="ECO:0007669"/>
    <property type="project" value="Ensembl"/>
</dbReference>
<dbReference type="CDD" id="cd00184">
    <property type="entry name" value="TNF"/>
    <property type="match status" value="1"/>
</dbReference>
<dbReference type="FunFam" id="2.60.120.40:FF:000016">
    <property type="entry name" value="Tumor necrosis factor"/>
    <property type="match status" value="1"/>
</dbReference>
<dbReference type="Gene3D" id="2.60.120.40">
    <property type="match status" value="1"/>
</dbReference>
<dbReference type="InterPro" id="IPR006053">
    <property type="entry name" value="TNF"/>
</dbReference>
<dbReference type="InterPro" id="IPR002960">
    <property type="entry name" value="TNF_beta"/>
</dbReference>
<dbReference type="InterPro" id="IPR021184">
    <property type="entry name" value="TNF_CS"/>
</dbReference>
<dbReference type="InterPro" id="IPR006052">
    <property type="entry name" value="TNF_dom"/>
</dbReference>
<dbReference type="InterPro" id="IPR008983">
    <property type="entry name" value="Tumour_necrosis_fac-like_dom"/>
</dbReference>
<dbReference type="PANTHER" id="PTHR11471:SF31">
    <property type="entry name" value="LYMPHOTOXIN-ALPHA"/>
    <property type="match status" value="1"/>
</dbReference>
<dbReference type="PANTHER" id="PTHR11471">
    <property type="entry name" value="TUMOR NECROSIS FACTOR FAMILY MEMBER"/>
    <property type="match status" value="1"/>
</dbReference>
<dbReference type="Pfam" id="PF00229">
    <property type="entry name" value="TNF"/>
    <property type="match status" value="1"/>
</dbReference>
<dbReference type="PRINTS" id="PR01234">
    <property type="entry name" value="TNECROSISFCT"/>
</dbReference>
<dbReference type="PRINTS" id="PR01236">
    <property type="entry name" value="TNFBETA"/>
</dbReference>
<dbReference type="SMART" id="SM00207">
    <property type="entry name" value="TNF"/>
    <property type="match status" value="1"/>
</dbReference>
<dbReference type="SUPFAM" id="SSF49842">
    <property type="entry name" value="TNF-like"/>
    <property type="match status" value="1"/>
</dbReference>
<dbReference type="PROSITE" id="PS00251">
    <property type="entry name" value="THD_1"/>
    <property type="match status" value="1"/>
</dbReference>
<dbReference type="PROSITE" id="PS50049">
    <property type="entry name" value="THD_2"/>
    <property type="match status" value="1"/>
</dbReference>